<name>UBP7_RAT</name>
<keyword id="KW-0007">Acetylation</keyword>
<keyword id="KW-0090">Biological rhythms</keyword>
<keyword id="KW-0158">Chromosome</keyword>
<keyword id="KW-0963">Cytoplasm</keyword>
<keyword id="KW-0217">Developmental protein</keyword>
<keyword id="KW-0227">DNA damage</keyword>
<keyword id="KW-0234">DNA repair</keyword>
<keyword id="KW-0378">Hydrolase</keyword>
<keyword id="KW-1017">Isopeptide bond</keyword>
<keyword id="KW-0539">Nucleus</keyword>
<keyword id="KW-0597">Phosphoprotein</keyword>
<keyword id="KW-0645">Protease</keyword>
<keyword id="KW-1185">Reference proteome</keyword>
<keyword id="KW-0788">Thiol protease</keyword>
<keyword id="KW-0832">Ubl conjugation</keyword>
<keyword id="KW-0833">Ubl conjugation pathway</keyword>
<organism>
    <name type="scientific">Rattus norvegicus</name>
    <name type="common">Rat</name>
    <dbReference type="NCBI Taxonomy" id="10116"/>
    <lineage>
        <taxon>Eukaryota</taxon>
        <taxon>Metazoa</taxon>
        <taxon>Chordata</taxon>
        <taxon>Craniata</taxon>
        <taxon>Vertebrata</taxon>
        <taxon>Euteleostomi</taxon>
        <taxon>Mammalia</taxon>
        <taxon>Eutheria</taxon>
        <taxon>Euarchontoglires</taxon>
        <taxon>Glires</taxon>
        <taxon>Rodentia</taxon>
        <taxon>Myomorpha</taxon>
        <taxon>Muroidea</taxon>
        <taxon>Muridae</taxon>
        <taxon>Murinae</taxon>
        <taxon>Rattus</taxon>
    </lineage>
</organism>
<dbReference type="EC" id="3.4.19.12" evidence="8 9"/>
<dbReference type="EMBL" id="AY641530">
    <property type="protein sequence ID" value="AAT68666.1"/>
    <property type="molecule type" value="mRNA"/>
</dbReference>
<dbReference type="RefSeq" id="NP_001019961.1">
    <property type="nucleotide sequence ID" value="NM_001024790.1"/>
</dbReference>
<dbReference type="BMRB" id="Q4VSI4"/>
<dbReference type="SMR" id="Q4VSI4"/>
<dbReference type="BioGRID" id="261960">
    <property type="interactions" value="3"/>
</dbReference>
<dbReference type="FunCoup" id="Q4VSI4">
    <property type="interactions" value="4607"/>
</dbReference>
<dbReference type="MINT" id="Q4VSI4"/>
<dbReference type="STRING" id="10116.ENSRNOP00000041134"/>
<dbReference type="MEROPS" id="C19.016"/>
<dbReference type="iPTMnet" id="Q4VSI4"/>
<dbReference type="PhosphoSitePlus" id="Q4VSI4"/>
<dbReference type="jPOST" id="Q4VSI4"/>
<dbReference type="PaxDb" id="10116-ENSRNOP00000041134"/>
<dbReference type="GeneID" id="360471"/>
<dbReference type="KEGG" id="rno:360471"/>
<dbReference type="UCSC" id="RGD:1306915">
    <property type="organism name" value="rat"/>
</dbReference>
<dbReference type="AGR" id="RGD:1306915"/>
<dbReference type="CTD" id="7874"/>
<dbReference type="RGD" id="1306915">
    <property type="gene designation" value="Usp7"/>
</dbReference>
<dbReference type="eggNOG" id="KOG1863">
    <property type="taxonomic scope" value="Eukaryota"/>
</dbReference>
<dbReference type="InParanoid" id="Q4VSI4"/>
<dbReference type="OrthoDB" id="289038at2759"/>
<dbReference type="PhylomeDB" id="Q4VSI4"/>
<dbReference type="Reactome" id="R-RNO-5689880">
    <property type="pathway name" value="Ub-specific processing proteases"/>
</dbReference>
<dbReference type="Reactome" id="R-RNO-6781823">
    <property type="pathway name" value="Formation of TC-NER Pre-Incision Complex"/>
</dbReference>
<dbReference type="Reactome" id="R-RNO-6782135">
    <property type="pathway name" value="Dual incision in TC-NER"/>
</dbReference>
<dbReference type="Reactome" id="R-RNO-6782210">
    <property type="pathway name" value="Gap-filling DNA repair synthesis and ligation in TC-NER"/>
</dbReference>
<dbReference type="Reactome" id="R-RNO-6804757">
    <property type="pathway name" value="Regulation of TP53 Degradation"/>
</dbReference>
<dbReference type="Reactome" id="R-RNO-8866652">
    <property type="pathway name" value="Synthesis of active ubiquitin: roles of E1 and E2 enzymes"/>
</dbReference>
<dbReference type="Reactome" id="R-RNO-8948747">
    <property type="pathway name" value="Regulation of PTEN localization"/>
</dbReference>
<dbReference type="PRO" id="PR:Q4VSI4"/>
<dbReference type="Proteomes" id="UP000002494">
    <property type="component" value="Unplaced"/>
</dbReference>
<dbReference type="GO" id="GO:0005737">
    <property type="term" value="C:cytoplasm"/>
    <property type="evidence" value="ECO:0000266"/>
    <property type="project" value="RGD"/>
</dbReference>
<dbReference type="GO" id="GO:0005829">
    <property type="term" value="C:cytosol"/>
    <property type="evidence" value="ECO:0000266"/>
    <property type="project" value="RGD"/>
</dbReference>
<dbReference type="GO" id="GO:0005634">
    <property type="term" value="C:nucleus"/>
    <property type="evidence" value="ECO:0000250"/>
    <property type="project" value="UniProtKB"/>
</dbReference>
<dbReference type="GO" id="GO:0016605">
    <property type="term" value="C:PML body"/>
    <property type="evidence" value="ECO:0000266"/>
    <property type="project" value="RGD"/>
</dbReference>
<dbReference type="GO" id="GO:0032991">
    <property type="term" value="C:protein-containing complex"/>
    <property type="evidence" value="ECO:0000266"/>
    <property type="project" value="RGD"/>
</dbReference>
<dbReference type="GO" id="GO:0001741">
    <property type="term" value="C:XY body"/>
    <property type="evidence" value="ECO:0000266"/>
    <property type="project" value="RGD"/>
</dbReference>
<dbReference type="GO" id="GO:0004843">
    <property type="term" value="F:cysteine-type deubiquitinase activity"/>
    <property type="evidence" value="ECO:0000314"/>
    <property type="project" value="RGD"/>
</dbReference>
<dbReference type="GO" id="GO:0004197">
    <property type="term" value="F:cysteine-type endopeptidase activity"/>
    <property type="evidence" value="ECO:0000250"/>
    <property type="project" value="UniProtKB"/>
</dbReference>
<dbReference type="GO" id="GO:0101005">
    <property type="term" value="F:deubiquitinase activity"/>
    <property type="evidence" value="ECO:0000250"/>
    <property type="project" value="UniProtKB"/>
</dbReference>
<dbReference type="GO" id="GO:0042802">
    <property type="term" value="F:identical protein binding"/>
    <property type="evidence" value="ECO:0000353"/>
    <property type="project" value="RGD"/>
</dbReference>
<dbReference type="GO" id="GO:1990380">
    <property type="term" value="F:K48-linked deubiquitinase activity"/>
    <property type="evidence" value="ECO:0000250"/>
    <property type="project" value="UniProtKB"/>
</dbReference>
<dbReference type="GO" id="GO:0002039">
    <property type="term" value="F:p53 binding"/>
    <property type="evidence" value="ECO:0000266"/>
    <property type="project" value="RGD"/>
</dbReference>
<dbReference type="GO" id="GO:0006307">
    <property type="term" value="P:DNA alkylation repair"/>
    <property type="evidence" value="ECO:0000250"/>
    <property type="project" value="UniProtKB"/>
</dbReference>
<dbReference type="GO" id="GO:0035520">
    <property type="term" value="P:monoubiquitinated protein deubiquitination"/>
    <property type="evidence" value="ECO:0000266"/>
    <property type="project" value="RGD"/>
</dbReference>
<dbReference type="GO" id="GO:0044027">
    <property type="term" value="P:negative regulation of gene expression via chromosomal CpG island methylation"/>
    <property type="evidence" value="ECO:0000250"/>
    <property type="project" value="UniProtKB"/>
</dbReference>
<dbReference type="GO" id="GO:0045721">
    <property type="term" value="P:negative regulation of gluconeogenesis"/>
    <property type="evidence" value="ECO:0000250"/>
    <property type="project" value="UniProtKB"/>
</dbReference>
<dbReference type="GO" id="GO:0032435">
    <property type="term" value="P:negative regulation of proteasomal ubiquitin-dependent protein catabolic process"/>
    <property type="evidence" value="ECO:0000266"/>
    <property type="project" value="RGD"/>
</dbReference>
<dbReference type="GO" id="GO:1904262">
    <property type="term" value="P:negative regulation of TORC1 signaling"/>
    <property type="evidence" value="ECO:0000266"/>
    <property type="project" value="RGD"/>
</dbReference>
<dbReference type="GO" id="GO:0043065">
    <property type="term" value="P:positive regulation of apoptotic process"/>
    <property type="evidence" value="ECO:0000314"/>
    <property type="project" value="RGD"/>
</dbReference>
<dbReference type="GO" id="GO:0016579">
    <property type="term" value="P:protein deubiquitination"/>
    <property type="evidence" value="ECO:0000314"/>
    <property type="project" value="RGD"/>
</dbReference>
<dbReference type="GO" id="GO:0050821">
    <property type="term" value="P:protein stabilization"/>
    <property type="evidence" value="ECO:0000250"/>
    <property type="project" value="UniProtKB"/>
</dbReference>
<dbReference type="GO" id="GO:0006508">
    <property type="term" value="P:proteolysis"/>
    <property type="evidence" value="ECO:0007669"/>
    <property type="project" value="UniProtKB-KW"/>
</dbReference>
<dbReference type="GO" id="GO:0042752">
    <property type="term" value="P:regulation of circadian rhythm"/>
    <property type="evidence" value="ECO:0000250"/>
    <property type="project" value="UniProtKB"/>
</dbReference>
<dbReference type="GO" id="GO:0051090">
    <property type="term" value="P:regulation of DNA-binding transcription factor activity"/>
    <property type="evidence" value="ECO:0000250"/>
    <property type="project" value="UniProtKB"/>
</dbReference>
<dbReference type="GO" id="GO:0070203">
    <property type="term" value="P:regulation of establishment of protein localization to telomere"/>
    <property type="evidence" value="ECO:0000266"/>
    <property type="project" value="RGD"/>
</dbReference>
<dbReference type="GO" id="GO:0031647">
    <property type="term" value="P:regulation of protein stability"/>
    <property type="evidence" value="ECO:0000314"/>
    <property type="project" value="RGD"/>
</dbReference>
<dbReference type="GO" id="GO:1905279">
    <property type="term" value="P:regulation of retrograde transport, endosome to Golgi"/>
    <property type="evidence" value="ECO:0000266"/>
    <property type="project" value="RGD"/>
</dbReference>
<dbReference type="GO" id="GO:0048511">
    <property type="term" value="P:rhythmic process"/>
    <property type="evidence" value="ECO:0007669"/>
    <property type="project" value="UniProtKB-KW"/>
</dbReference>
<dbReference type="GO" id="GO:0075342">
    <property type="term" value="P:symbiont-mediated disruption of host cell PML body"/>
    <property type="evidence" value="ECO:0000266"/>
    <property type="project" value="RGD"/>
</dbReference>
<dbReference type="GO" id="GO:0140673">
    <property type="term" value="P:transcription elongation-coupled chromatin remodeling"/>
    <property type="evidence" value="ECO:0000266"/>
    <property type="project" value="RGD"/>
</dbReference>
<dbReference type="GO" id="GO:0006283">
    <property type="term" value="P:transcription-coupled nucleotide-excision repair"/>
    <property type="evidence" value="ECO:0000250"/>
    <property type="project" value="UniProtKB"/>
</dbReference>
<dbReference type="CDD" id="cd03772">
    <property type="entry name" value="MATH_HAUSP"/>
    <property type="match status" value="1"/>
</dbReference>
<dbReference type="CDD" id="cd02659">
    <property type="entry name" value="peptidase_C19C"/>
    <property type="match status" value="1"/>
</dbReference>
<dbReference type="FunFam" id="3.10.20.90:FF:000057">
    <property type="entry name" value="Putative ubiquitin carboxyl-terminal hydrolase 7"/>
    <property type="match status" value="1"/>
</dbReference>
<dbReference type="FunFam" id="3.10.20.90:FF:000064">
    <property type="entry name" value="Putative ubiquitin carboxyl-terminal hydrolase 7"/>
    <property type="match status" value="1"/>
</dbReference>
<dbReference type="FunFam" id="2.60.210.10:FF:000006">
    <property type="entry name" value="Ubiquitin carboxyl-terminal hydrolase 7"/>
    <property type="match status" value="1"/>
</dbReference>
<dbReference type="FunFam" id="3.90.70.10:FF:000005">
    <property type="entry name" value="Ubiquitin carboxyl-terminal hydrolase 7"/>
    <property type="match status" value="1"/>
</dbReference>
<dbReference type="Gene3D" id="2.60.210.10">
    <property type="entry name" value="Apoptosis, Tumor Necrosis Factor Receptor Associated Protein 2, Chain A"/>
    <property type="match status" value="1"/>
</dbReference>
<dbReference type="Gene3D" id="3.90.70.10">
    <property type="entry name" value="Cysteine proteinases"/>
    <property type="match status" value="1"/>
</dbReference>
<dbReference type="Gene3D" id="3.10.20.90">
    <property type="entry name" value="Phosphatidylinositol 3-kinase Catalytic Subunit, Chain A, domain 1"/>
    <property type="match status" value="2"/>
</dbReference>
<dbReference type="InterPro" id="IPR002083">
    <property type="entry name" value="MATH/TRAF_dom"/>
</dbReference>
<dbReference type="InterPro" id="IPR038765">
    <property type="entry name" value="Papain-like_cys_pep_sf"/>
</dbReference>
<dbReference type="InterPro" id="IPR050164">
    <property type="entry name" value="Peptidase_C19"/>
</dbReference>
<dbReference type="InterPro" id="IPR001394">
    <property type="entry name" value="Peptidase_C19_UCH"/>
</dbReference>
<dbReference type="InterPro" id="IPR008974">
    <property type="entry name" value="TRAF-like"/>
</dbReference>
<dbReference type="InterPro" id="IPR024729">
    <property type="entry name" value="USP7_ICP0-binding_dom"/>
</dbReference>
<dbReference type="InterPro" id="IPR029346">
    <property type="entry name" value="USP_C"/>
</dbReference>
<dbReference type="InterPro" id="IPR018200">
    <property type="entry name" value="USP_CS"/>
</dbReference>
<dbReference type="InterPro" id="IPR028889">
    <property type="entry name" value="USP_dom"/>
</dbReference>
<dbReference type="PANTHER" id="PTHR24006">
    <property type="entry name" value="UBIQUITIN CARBOXYL-TERMINAL HYDROLASE"/>
    <property type="match status" value="1"/>
</dbReference>
<dbReference type="PANTHER" id="PTHR24006:SF644">
    <property type="entry name" value="UBIQUITIN CARBOXYL-TERMINAL HYDROLASE 7"/>
    <property type="match status" value="1"/>
</dbReference>
<dbReference type="Pfam" id="PF22486">
    <property type="entry name" value="MATH_2"/>
    <property type="match status" value="1"/>
</dbReference>
<dbReference type="Pfam" id="PF00443">
    <property type="entry name" value="UCH"/>
    <property type="match status" value="1"/>
</dbReference>
<dbReference type="Pfam" id="PF14533">
    <property type="entry name" value="USP7_C2"/>
    <property type="match status" value="1"/>
</dbReference>
<dbReference type="Pfam" id="PF12436">
    <property type="entry name" value="USP7_ICP0_bdg"/>
    <property type="match status" value="1"/>
</dbReference>
<dbReference type="SMART" id="SM00061">
    <property type="entry name" value="MATH"/>
    <property type="match status" value="1"/>
</dbReference>
<dbReference type="SUPFAM" id="SSF54001">
    <property type="entry name" value="Cysteine proteinases"/>
    <property type="match status" value="1"/>
</dbReference>
<dbReference type="SUPFAM" id="SSF49599">
    <property type="entry name" value="TRAF domain-like"/>
    <property type="match status" value="1"/>
</dbReference>
<dbReference type="PROSITE" id="PS50144">
    <property type="entry name" value="MATH"/>
    <property type="match status" value="1"/>
</dbReference>
<dbReference type="PROSITE" id="PS00972">
    <property type="entry name" value="USP_1"/>
    <property type="match status" value="1"/>
</dbReference>
<dbReference type="PROSITE" id="PS00973">
    <property type="entry name" value="USP_2"/>
    <property type="match status" value="1"/>
</dbReference>
<dbReference type="PROSITE" id="PS50235">
    <property type="entry name" value="USP_3"/>
    <property type="match status" value="1"/>
</dbReference>
<accession>Q4VSI4</accession>
<proteinExistence type="evidence at protein level"/>
<feature type="chain" id="PRO_0000268007" description="Ubiquitin carboxyl-terminal hydrolase 7">
    <location>
        <begin position="1"/>
        <end position="1103"/>
    </location>
</feature>
<feature type="domain" description="MATH" evidence="4">
    <location>
        <begin position="69"/>
        <end position="196"/>
    </location>
</feature>
<feature type="domain" description="USP">
    <location>
        <begin position="215"/>
        <end position="522"/>
    </location>
</feature>
<feature type="region of interest" description="Interaction with TSPYL5" evidence="3">
    <location>
        <begin position="1"/>
        <end position="209"/>
    </location>
</feature>
<feature type="region of interest" description="Disordered" evidence="7">
    <location>
        <begin position="1"/>
        <end position="40"/>
    </location>
</feature>
<feature type="region of interest" description="Interaction with p53/TP53 and MDM2" evidence="3">
    <location>
        <begin position="54"/>
        <end position="209"/>
    </location>
</feature>
<feature type="region of interest" description="Necessary for nuclear localization" evidence="3">
    <location>
        <begin position="71"/>
        <end position="206"/>
    </location>
</feature>
<feature type="compositionally biased region" description="Low complexity" evidence="7">
    <location>
        <begin position="1"/>
        <end position="11"/>
    </location>
</feature>
<feature type="compositionally biased region" description="Acidic residues" evidence="7">
    <location>
        <begin position="20"/>
        <end position="32"/>
    </location>
</feature>
<feature type="active site" description="Nucleophile" evidence="5 6 8 9">
    <location>
        <position position="224"/>
    </location>
</feature>
<feature type="active site" description="Proton acceptor" evidence="5 6">
    <location>
        <position position="465"/>
    </location>
</feature>
<feature type="modified residue" description="Phosphoserine" evidence="11">
    <location>
        <position position="19"/>
    </location>
</feature>
<feature type="modified residue" description="Phosphoserine" evidence="2">
    <location>
        <position position="50"/>
    </location>
</feature>
<feature type="modified residue" description="Phosphoserine" evidence="2">
    <location>
        <position position="54"/>
    </location>
</feature>
<feature type="modified residue" description="N6-acetyllysine; alternate" evidence="3">
    <location>
        <position position="870"/>
    </location>
</feature>
<feature type="modified residue" description="Phosphoserine" evidence="3">
    <location>
        <position position="964"/>
    </location>
</feature>
<feature type="modified residue" description="N6-acetyllysine" evidence="3">
    <location>
        <position position="1085"/>
    </location>
</feature>
<feature type="modified residue" description="N6-acetyllysine" evidence="3">
    <location>
        <position position="1097"/>
    </location>
</feature>
<feature type="cross-link" description="Glycyl lysine isopeptide (Lys-Gly) (interchain with G-Cter in SUMO2); alternate" evidence="3">
    <location>
        <position position="870"/>
    </location>
</feature>
<feature type="cross-link" description="Glycyl lysine isopeptide (Lys-Gly) (interchain with G-Cter in ubiquitin); alternate" evidence="3">
    <location>
        <position position="870"/>
    </location>
</feature>
<feature type="cross-link" description="Glycyl lysine isopeptide (Lys-Gly) (interchain with G-Cter in SUMO2)" evidence="3">
    <location>
        <position position="883"/>
    </location>
</feature>
<feature type="mutagenesis site" description="Loss of p53/TP53-deubiquitinating activity." evidence="8 9">
    <original>C</original>
    <variation>S</variation>
    <location>
        <position position="224"/>
    </location>
</feature>
<comment type="function">
    <text evidence="3 8 9">Hydrolase that deubiquitinates target proteins such as ARMC5, FOXO4, DEPTOR, KAT5, p53/TP53, MDM2, ERCC6, DNMT1, UHRF1, PTEN, KMT2E/MLL5 and DAXX (PubMed:16111684, PubMed:16328052). Together with DAXX, prevents MDM2 self-ubiquitination and enhances the E3 ligase activity of MDM2 towards p53/TP53, thereby promoting p53/TP53 ubiquitination and proteasomal degradation (By similarity). Deubiquitinates p53/TP53, preventing degradation of p53/TP53, and enhances p53/TP53-dependent transcription regulation, cell growth repression and apoptosis (By similarity). Deubiquitinates p53/TP53 and MDM2 and strongly stabilizes p53/TP53 even in the presence of excess MDM2, and also induces p53/TP53-dependent cell growth repression and apoptosis (By similarity). Deubiquitination of FOXO4 in presence of hydrogen peroxide is not dependent on p53/TP53 and inhibits FOXO4-induced transcriptional activity. In association with DAXX, is involved in the deubiquitination and translocation of PTEN from the nucleus to the cytoplasm, both processes that are counteracted by PML (By similarity). Deubiquitinates KMT2E preventing KMT2E proteasomal-mediated degradation (By similarity). Involved in cell proliferation during early embryonic development (By similarity). Involved in transcription-coupled nucleotide excision repair (TC-NER) in response to UV damage: recruited to DNA damage sites following interaction with KIAA1530/UVSSA and promotes deubiquitination of ERCC6, preventing UV-induced degradation of ERCC6 (By similarity). Involved in maintenance of DNA methylation via its interaction with UHRF1 and DNMT1: acts by mediating deubiquitination of UHRF1 and DNMT1, preventing their degradation and promoting DNA methylation by DNMT1 (By similarity). Deubiquitinates alkylation repair enzyme ALKBH3. OTUD4 recruits USP7 and USP9X to stabilize ALKBH3, thereby promoting the repair of alkylated DNA lesions (By similarity). Acts as a chromatin regulator via its association with the Polycomb group (PcG) multiprotein PRC1-like complex; may act by deubiquitinating components of the PRC1-like complex (By similarity). Able to mediate deubiquitination of histone H2B; it is however unsure whether this activity takes place in vivo (By similarity). Exhibits a preference towards 'Lys-48'-linked ubiquitin chains. Increases regulatory T-cells (Treg) suppressive capacity by deubiquitinating and stabilizing transcription factor FOXP3 which is crucial for Treg cell function (By similarity). Plays a role in the maintenance of the circadian clock periodicity via deubiquitination and stabilization of the CRY1 and CRY2 proteins (By similarity). Deubiquitinates REST, thereby stabilizing REST and promoting the maintenance of neural progenitor cells (By similarity). Deubiquitinates SIRT7, inhibiting SIRT7 histone deacetylase activity and regulating gluconeogenesis (By similarity). Involved in the regulation of WASH-dependent actin polymerization at the surface of endosomes and the regulation of endosomal protein recycling (By similarity). It maintains optimal WASH complex activity and precise F-actin levels via deubiquitination of TRIM27 and WASHC1 (By similarity). Mediates the deubiquitination of phosphorylated DEPTOR, promoting its stability and leading to decreased mTORC1 signaling (By similarity).</text>
</comment>
<comment type="catalytic activity">
    <reaction evidence="8 9">
        <text>Thiol-dependent hydrolysis of ester, thioester, amide, peptide and isopeptide bonds formed by the C-terminal Gly of ubiquitin (a 76-residue protein attached to proteins as an intracellular targeting signal).</text>
        <dbReference type="EC" id="3.4.19.12"/>
    </reaction>
</comment>
<comment type="subunit">
    <text evidence="2 3 8">Monomer. Homodimer (PubMed:16111684). Part of a complex with DAXX, MDM2, RASSF1 and USP7. Part of a complex with DAXX, MDM2 and USP7. Interacts with MDM2; the interaction is independent of p53/TP53. Interacts with DAXX; the interaction is direct and independent of MDM2 and p53/TP53. Component of a complex composed of KMT2E, OGT and USP7; the complex stabilizes KMT2E, preventing KMT2E ubiquitination and proteasomal-mediated degradation (By similarity). Interacts (via MATH domain) with KMT2E (By similarity). Interacts with OGT (By similarity). Interacts with FOXO4; the interaction is enhanced in presence of hydrogen peroxide and occurs independently of p53/TP53. Interacts with p53/TP53; the interaction is enhanced in response to DNA damage; the interaction is impaired by TSPYL5. Interacts with PTEN; the interaction is direct. Interacts with ATXN1 and the strength of interaction is influenced by the length of the poly-Gln region in ATXN1. A weaker interaction seen with mutants having longer poly-Gln regions. Interacts with KIAA1530/UVSSA. Interacts with MEX3C and antagonizes its ability to degrade mRNA. Interacts with DNMT1 and UHRF1. Interacts with FOXP3. Interacts (via MATH domain) with RNF220 (By similarity). Associated component of the Polycomb group (PcG) multiprotein PRC1-like complex (By similarity). Interacts with EPOP (By similarity). Interacts with OTUD4 and USP9X; the interaction is direct (By similarity). Interacts with CRY2 (By similarity). Interacts with REST (By similarity). Interacts with ERCC6 (By similarity). Part of a complex consisting of USP7, MAGEL2 and TRIM27; directly interacts with MAGEL2; directly interacts with TRIM27 (By similarity).</text>
</comment>
<comment type="subcellular location">
    <subcellularLocation>
        <location evidence="3">Nucleus</location>
    </subcellularLocation>
    <subcellularLocation>
        <location evidence="3">Cytoplasm</location>
    </subcellularLocation>
    <subcellularLocation>
        <location evidence="3">Nucleus</location>
        <location evidence="3">PML body</location>
    </subcellularLocation>
    <subcellularLocation>
        <location evidence="3">Chromosome</location>
    </subcellularLocation>
    <text evidence="3">Present in a minority of ND10 nuclear bodies. Association with ICP0/VMW110 at early times of infection leads to an increased proportion of USP7-containing ND10. Colocalizes with ATXN1 in the nucleus. Colocalized with DAXX in speckled structures. Colocalized with PML and PTEN in promyelocytic leukemia protein (PML) nuclear bodies.</text>
</comment>
<comment type="tissue specificity">
    <text evidence="8">Strongly expressed in the testis, spleen and brain. Weakly expressed in the stomach, small intestine, skeletal muscle and uterus.</text>
</comment>
<comment type="domain">
    <text>The C-terminus plays a role in its oligomerization.</text>
</comment>
<comment type="PTM">
    <text evidence="8">Polyneddylated.</text>
</comment>
<comment type="PTM">
    <text evidence="1">Not sumoylated.</text>
</comment>
<comment type="PTM">
    <text evidence="3 8 9">Ubiquitinated at Lys-870 (By similarity). Polyubiquitinated.</text>
</comment>
<comment type="similarity">
    <text evidence="10">Belongs to the peptidase C19 family.</text>
</comment>
<evidence type="ECO:0000250" key="1"/>
<evidence type="ECO:0000250" key="2">
    <source>
        <dbReference type="UniProtKB" id="Q6A4J8"/>
    </source>
</evidence>
<evidence type="ECO:0000250" key="3">
    <source>
        <dbReference type="UniProtKB" id="Q93009"/>
    </source>
</evidence>
<evidence type="ECO:0000255" key="4">
    <source>
        <dbReference type="PROSITE-ProRule" id="PRU00129"/>
    </source>
</evidence>
<evidence type="ECO:0000255" key="5">
    <source>
        <dbReference type="PROSITE-ProRule" id="PRU10092"/>
    </source>
</evidence>
<evidence type="ECO:0000255" key="6">
    <source>
        <dbReference type="PROSITE-ProRule" id="PRU10093"/>
    </source>
</evidence>
<evidence type="ECO:0000256" key="7">
    <source>
        <dbReference type="SAM" id="MobiDB-lite"/>
    </source>
</evidence>
<evidence type="ECO:0000269" key="8">
    <source>
    </source>
</evidence>
<evidence type="ECO:0000269" key="9">
    <source>
    </source>
</evidence>
<evidence type="ECO:0000305" key="10"/>
<evidence type="ECO:0007744" key="11">
    <source>
    </source>
</evidence>
<gene>
    <name type="primary">Usp7</name>
    <name type="synonym">Hausp</name>
</gene>
<reference key="1">
    <citation type="journal article" date="2005" name="FEBS Lett.">
        <title>HAUSP, a deubiquitinating enzyme for p53, is polyubiquitinated, polyneddylated, and dimerized.</title>
        <authorList>
            <person name="Lee H.-J."/>
            <person name="Kim M.-S."/>
            <person name="Kim Y.-K."/>
            <person name="Oh Y.-K."/>
            <person name="Baek K.-H."/>
        </authorList>
    </citation>
    <scope>NUCLEOTIDE SEQUENCE [MRNA]</scope>
    <scope>FUNCTION</scope>
    <scope>CATALYTIC ACTIVITY</scope>
    <scope>SUBUNIT</scope>
    <scope>TISSUE SPECIFICITY</scope>
    <scope>MUTAGENESIS OF CYS-224</scope>
    <scope>POLYUBIQUITINATION</scope>
    <scope>POLYNEDDYLATION</scope>
    <source>
        <tissue>Testis</tissue>
    </source>
</reference>
<reference key="2">
    <citation type="journal article" date="2006" name="Oncol. Rep.">
        <title>Molecular cloning of rHAUSP encoding a deubiquitinating enzyme in rat testis.</title>
        <authorList>
            <person name="Baek K.H."/>
            <person name="Lee H.J."/>
            <person name="Kim M.S."/>
            <person name="Kim Y.S."/>
            <person name="Seong M."/>
            <person name="Lee E.J."/>
            <person name="Lee M.Y."/>
        </authorList>
    </citation>
    <scope>FUNCTION</scope>
    <scope>CATALYTIC ACTIVITY</scope>
    <scope>UBIQUITINATION</scope>
    <scope>MUTAGENESIS OF CYS-224</scope>
    <source>
        <tissue>Testis</tissue>
    </source>
</reference>
<reference key="3">
    <citation type="journal article" date="2012" name="Nat. Commun.">
        <title>Quantitative maps of protein phosphorylation sites across 14 different rat organs and tissues.</title>
        <authorList>
            <person name="Lundby A."/>
            <person name="Secher A."/>
            <person name="Lage K."/>
            <person name="Nordsborg N.B."/>
            <person name="Dmytriyev A."/>
            <person name="Lundby C."/>
            <person name="Olsen J.V."/>
        </authorList>
    </citation>
    <scope>PHOSPHORYLATION [LARGE SCALE ANALYSIS] AT SER-19</scope>
    <scope>IDENTIFICATION BY MASS SPECTROMETRY [LARGE SCALE ANALYSIS]</scope>
</reference>
<protein>
    <recommendedName>
        <fullName>Ubiquitin carboxyl-terminal hydrolase 7</fullName>
        <ecNumber evidence="8 9">3.4.19.12</ecNumber>
    </recommendedName>
    <alternativeName>
        <fullName>Deubiquitinating enzyme 7</fullName>
    </alternativeName>
    <alternativeName>
        <fullName>Herpesvirus-associated ubiquitin-specific protease</fullName>
        <shortName>rHAUSP</shortName>
    </alternativeName>
    <alternativeName>
        <fullName>Ubiquitin thioesterase 7</fullName>
    </alternativeName>
    <alternativeName>
        <fullName>Ubiquitin-specific-processing protease 7</fullName>
    </alternativeName>
</protein>
<sequence length="1103" mass="128431">MNHQQQQQQQQKAGEQQLSEPEDMEMEAGDTDDPPRITQNPVINGNVALSDGHSNAEEDMEDDTSWRSEATFQFTVERFSRLSESVLSPPCFVRNLPWKIMVMPRFYPDRPHQKSVGFFLQCNAESDSTSWSCHAQAVLKIINYRDDDKSFSRRISHLFFHKENDWGFSNFMAWSEVTDPEKGFIDDDKVTFEVFVQADAPHGVAWDSKKHTGYVGLKNQGATCYMNSLLQTLFFTNQLRKAVYMMPTEGDDSSKSVPLALQRVFYELQHSDKPVGTKKLTKSFGWETLDSFMQHDVQELCRVLLDNVENKMKGTCVEGTIPKLFRGKMVSYIQCKEVDYRSDRREDYYDIQLSIKGKKNIFESFVDYVAVEQLDGDNKYDAGEHGLQEAEKGVKFLTLPPVLHLQLMRFMYDPQTDQNIKINDRFEFPEQLPLDEFLQKTDPKDPANYILHAVLVHSGDNHGGHYVVYLNPKGDGKWCKFDDDVVSRCTKEEAIEHNYGGHDDDLSVRHCTNAYMLVYIRESKLSEVLQAVTDHDIPQQLVERLQEEKRIEAQKRKERQEAHLYMQVQIVAEDQFCGHQGNDMYDEEKVRYTVFKVLKNSSLAEFVQSLSQTMGFPQDQIRLWPMQARSNGTKRPAMLDNEADGSKTMIELSDNENPWTIFLETVDPELAASGATLPKFDKDHDVMLFLKMYDPKTRSLNYCGHIYTPISCKIRDLLPVMCDRAGFIQDTSLILYEEVKPNLTERIQDYDVSLDKALDELMDGDIIVFQKDDPENDNSELPTAKEYFRDLYHRVDVIFCDKTIPNDPGFVVTLSNRMNYFQVAKTVAQRLNTDPMLLQFFKSQGYRDGPGNPLRHNYEGTLRDLLQFFKPRQPKKLYYQQLKMKITDFENRRSFKCIWLNSQFREEEITLYPDKHGCVRDLLEECKKAVELGDEASGRLRLLEIVSYKIIGVHQEDELLECLSPATSRTFRIEEIPLDQVNIDKENEMLITVAHFHKEVFGTFGIPFLLRIHQGEHFREVMKRIQSLLDIQEKEFEKFKFAIVMMGRHQYINEDEYEVNLKDFEPQPGNMSHPRPWLGLDHFNKAPKRSRYTYLEKAIKIHN</sequence>